<gene>
    <name evidence="1" type="primary">kdsA</name>
    <name type="ordered locus">SPA1101</name>
</gene>
<accession>Q5PNK8</accession>
<dbReference type="EC" id="2.5.1.55" evidence="1"/>
<dbReference type="EMBL" id="CP000026">
    <property type="protein sequence ID" value="AAV77070.1"/>
    <property type="molecule type" value="Genomic_DNA"/>
</dbReference>
<dbReference type="RefSeq" id="WP_000811050.1">
    <property type="nucleotide sequence ID" value="NC_006511.1"/>
</dbReference>
<dbReference type="SMR" id="Q5PNK8"/>
<dbReference type="KEGG" id="spt:SPA1101"/>
<dbReference type="HOGENOM" id="CLU_036666_0_0_6"/>
<dbReference type="UniPathway" id="UPA00030"/>
<dbReference type="UniPathway" id="UPA00357">
    <property type="reaction ID" value="UER00474"/>
</dbReference>
<dbReference type="Proteomes" id="UP000008185">
    <property type="component" value="Chromosome"/>
</dbReference>
<dbReference type="GO" id="GO:0005737">
    <property type="term" value="C:cytoplasm"/>
    <property type="evidence" value="ECO:0007669"/>
    <property type="project" value="UniProtKB-SubCell"/>
</dbReference>
<dbReference type="GO" id="GO:0008676">
    <property type="term" value="F:3-deoxy-8-phosphooctulonate synthase activity"/>
    <property type="evidence" value="ECO:0007669"/>
    <property type="project" value="UniProtKB-UniRule"/>
</dbReference>
<dbReference type="GO" id="GO:0019294">
    <property type="term" value="P:keto-3-deoxy-D-manno-octulosonic acid biosynthetic process"/>
    <property type="evidence" value="ECO:0007669"/>
    <property type="project" value="UniProtKB-UniRule"/>
</dbReference>
<dbReference type="FunFam" id="3.20.20.70:FF:000058">
    <property type="entry name" value="2-dehydro-3-deoxyphosphooctonate aldolase"/>
    <property type="match status" value="1"/>
</dbReference>
<dbReference type="Gene3D" id="3.20.20.70">
    <property type="entry name" value="Aldolase class I"/>
    <property type="match status" value="1"/>
</dbReference>
<dbReference type="HAMAP" id="MF_00056">
    <property type="entry name" value="KDO8P_synth"/>
    <property type="match status" value="1"/>
</dbReference>
<dbReference type="InterPro" id="IPR013785">
    <property type="entry name" value="Aldolase_TIM"/>
</dbReference>
<dbReference type="InterPro" id="IPR006218">
    <property type="entry name" value="DAHP1/KDSA"/>
</dbReference>
<dbReference type="InterPro" id="IPR006269">
    <property type="entry name" value="KDO8P_synthase"/>
</dbReference>
<dbReference type="NCBIfam" id="TIGR01362">
    <property type="entry name" value="KDO8P_synth"/>
    <property type="match status" value="1"/>
</dbReference>
<dbReference type="NCBIfam" id="NF003543">
    <property type="entry name" value="PRK05198.1"/>
    <property type="match status" value="1"/>
</dbReference>
<dbReference type="NCBIfam" id="NF009109">
    <property type="entry name" value="PRK12457.1"/>
    <property type="match status" value="1"/>
</dbReference>
<dbReference type="PANTHER" id="PTHR21057">
    <property type="entry name" value="PHOSPHO-2-DEHYDRO-3-DEOXYHEPTONATE ALDOLASE"/>
    <property type="match status" value="1"/>
</dbReference>
<dbReference type="Pfam" id="PF00793">
    <property type="entry name" value="DAHP_synth_1"/>
    <property type="match status" value="1"/>
</dbReference>
<dbReference type="SUPFAM" id="SSF51569">
    <property type="entry name" value="Aldolase"/>
    <property type="match status" value="1"/>
</dbReference>
<comment type="catalytic activity">
    <reaction evidence="1">
        <text>D-arabinose 5-phosphate + phosphoenolpyruvate + H2O = 3-deoxy-alpha-D-manno-2-octulosonate-8-phosphate + phosphate</text>
        <dbReference type="Rhea" id="RHEA:14053"/>
        <dbReference type="ChEBI" id="CHEBI:15377"/>
        <dbReference type="ChEBI" id="CHEBI:43474"/>
        <dbReference type="ChEBI" id="CHEBI:57693"/>
        <dbReference type="ChEBI" id="CHEBI:58702"/>
        <dbReference type="ChEBI" id="CHEBI:85985"/>
        <dbReference type="EC" id="2.5.1.55"/>
    </reaction>
</comment>
<comment type="pathway">
    <text evidence="1">Carbohydrate biosynthesis; 3-deoxy-D-manno-octulosonate biosynthesis; 3-deoxy-D-manno-octulosonate from D-ribulose 5-phosphate: step 2/3.</text>
</comment>
<comment type="pathway">
    <text evidence="1">Bacterial outer membrane biogenesis; lipopolysaccharide biosynthesis.</text>
</comment>
<comment type="subcellular location">
    <subcellularLocation>
        <location evidence="1">Cytoplasm</location>
    </subcellularLocation>
</comment>
<comment type="similarity">
    <text evidence="1">Belongs to the KdsA family.</text>
</comment>
<reference key="1">
    <citation type="journal article" date="2004" name="Nat. Genet.">
        <title>Comparison of genome degradation in Paratyphi A and Typhi, human-restricted serovars of Salmonella enterica that cause typhoid.</title>
        <authorList>
            <person name="McClelland M."/>
            <person name="Sanderson K.E."/>
            <person name="Clifton S.W."/>
            <person name="Latreille P."/>
            <person name="Porwollik S."/>
            <person name="Sabo A."/>
            <person name="Meyer R."/>
            <person name="Bieri T."/>
            <person name="Ozersky P."/>
            <person name="McLellan M."/>
            <person name="Harkins C.R."/>
            <person name="Wang C."/>
            <person name="Nguyen C."/>
            <person name="Berghoff A."/>
            <person name="Elliott G."/>
            <person name="Kohlberg S."/>
            <person name="Strong C."/>
            <person name="Du F."/>
            <person name="Carter J."/>
            <person name="Kremizki C."/>
            <person name="Layman D."/>
            <person name="Leonard S."/>
            <person name="Sun H."/>
            <person name="Fulton L."/>
            <person name="Nash W."/>
            <person name="Miner T."/>
            <person name="Minx P."/>
            <person name="Delehaunty K."/>
            <person name="Fronick C."/>
            <person name="Magrini V."/>
            <person name="Nhan M."/>
            <person name="Warren W."/>
            <person name="Florea L."/>
            <person name="Spieth J."/>
            <person name="Wilson R.K."/>
        </authorList>
    </citation>
    <scope>NUCLEOTIDE SEQUENCE [LARGE SCALE GENOMIC DNA]</scope>
    <source>
        <strain>ATCC 9150 / SARB42</strain>
    </source>
</reference>
<feature type="chain" id="PRO_0000187162" description="2-dehydro-3-deoxyphosphooctonate aldolase">
    <location>
        <begin position="1"/>
        <end position="284"/>
    </location>
</feature>
<keyword id="KW-0963">Cytoplasm</keyword>
<keyword id="KW-0448">Lipopolysaccharide biosynthesis</keyword>
<keyword id="KW-0808">Transferase</keyword>
<evidence type="ECO:0000255" key="1">
    <source>
        <dbReference type="HAMAP-Rule" id="MF_00056"/>
    </source>
</evidence>
<sequence>MKQKVVNIGDIKVANDLPFVLFGGMNVLESRDLAMRICEHYVTVTQKLGIPYVFKASFDKANRSSIHSYRGPGLEEGMKIFQELKQTFGVKVITDVHEASQVQPVADVVDVIQLPAFLARQTDLVEAMAKTGAVINVKKPQFVSPGQMGNIVDKFHEGGNDKVILCDRGANFGYDNLVVDMLGFSVMKKVSGNSPVIFDVTHALQCRDPFGAASGGRRGQVTELARAGMAVGLAGLFLESHPDPANAKCDGPSALPLAKLEQFLTQIKAIDDLVKSFDELDTEN</sequence>
<protein>
    <recommendedName>
        <fullName evidence="1">2-dehydro-3-deoxyphosphooctonate aldolase</fullName>
        <ecNumber evidence="1">2.5.1.55</ecNumber>
    </recommendedName>
    <alternativeName>
        <fullName evidence="1">3-deoxy-D-manno-octulosonic acid 8-phosphate synthase</fullName>
    </alternativeName>
    <alternativeName>
        <fullName evidence="1">KDO-8-phosphate synthase</fullName>
        <shortName evidence="1">KDO 8-P synthase</shortName>
        <shortName evidence="1">KDOPS</shortName>
    </alternativeName>
    <alternativeName>
        <fullName evidence="1">Phospho-2-dehydro-3-deoxyoctonate aldolase</fullName>
    </alternativeName>
</protein>
<name>KDSA_SALPA</name>
<proteinExistence type="inferred from homology"/>
<organism>
    <name type="scientific">Salmonella paratyphi A (strain ATCC 9150 / SARB42)</name>
    <dbReference type="NCBI Taxonomy" id="295319"/>
    <lineage>
        <taxon>Bacteria</taxon>
        <taxon>Pseudomonadati</taxon>
        <taxon>Pseudomonadota</taxon>
        <taxon>Gammaproteobacteria</taxon>
        <taxon>Enterobacterales</taxon>
        <taxon>Enterobacteriaceae</taxon>
        <taxon>Salmonella</taxon>
    </lineage>
</organism>